<keyword id="KW-1185">Reference proteome</keyword>
<proteinExistence type="inferred from homology"/>
<protein>
    <recommendedName>
        <fullName evidence="1">Putative competence-damage inducible protein</fullName>
    </recommendedName>
</protein>
<evidence type="ECO:0000255" key="1">
    <source>
        <dbReference type="HAMAP-Rule" id="MF_00226"/>
    </source>
</evidence>
<reference key="1">
    <citation type="journal article" date="2003" name="Nature">
        <title>The genome sequence of Bacillus anthracis Ames and comparison to closely related bacteria.</title>
        <authorList>
            <person name="Read T.D."/>
            <person name="Peterson S.N."/>
            <person name="Tourasse N.J."/>
            <person name="Baillie L.W."/>
            <person name="Paulsen I.T."/>
            <person name="Nelson K.E."/>
            <person name="Tettelin H."/>
            <person name="Fouts D.E."/>
            <person name="Eisen J.A."/>
            <person name="Gill S.R."/>
            <person name="Holtzapple E.K."/>
            <person name="Okstad O.A."/>
            <person name="Helgason E."/>
            <person name="Rilstone J."/>
            <person name="Wu M."/>
            <person name="Kolonay J.F."/>
            <person name="Beanan M.J."/>
            <person name="Dodson R.J."/>
            <person name="Brinkac L.M."/>
            <person name="Gwinn M.L."/>
            <person name="DeBoy R.T."/>
            <person name="Madpu R."/>
            <person name="Daugherty S.C."/>
            <person name="Durkin A.S."/>
            <person name="Haft D.H."/>
            <person name="Nelson W.C."/>
            <person name="Peterson J.D."/>
            <person name="Pop M."/>
            <person name="Khouri H.M."/>
            <person name="Radune D."/>
            <person name="Benton J.L."/>
            <person name="Mahamoud Y."/>
            <person name="Jiang L."/>
            <person name="Hance I.R."/>
            <person name="Weidman J.F."/>
            <person name="Berry K.J."/>
            <person name="Plaut R.D."/>
            <person name="Wolf A.M."/>
            <person name="Watkins K.L."/>
            <person name="Nierman W.C."/>
            <person name="Hazen A."/>
            <person name="Cline R.T."/>
            <person name="Redmond C."/>
            <person name="Thwaite J.E."/>
            <person name="White O."/>
            <person name="Salzberg S.L."/>
            <person name="Thomason B."/>
            <person name="Friedlander A.M."/>
            <person name="Koehler T.M."/>
            <person name="Hanna P.C."/>
            <person name="Kolstoe A.-B."/>
            <person name="Fraser C.M."/>
        </authorList>
    </citation>
    <scope>NUCLEOTIDE SEQUENCE [LARGE SCALE GENOMIC DNA]</scope>
    <source>
        <strain>Ames / isolate Porton</strain>
    </source>
</reference>
<reference key="2">
    <citation type="journal article" date="2009" name="J. Bacteriol.">
        <title>The complete genome sequence of Bacillus anthracis Ames 'Ancestor'.</title>
        <authorList>
            <person name="Ravel J."/>
            <person name="Jiang L."/>
            <person name="Stanley S.T."/>
            <person name="Wilson M.R."/>
            <person name="Decker R.S."/>
            <person name="Read T.D."/>
            <person name="Worsham P."/>
            <person name="Keim P.S."/>
            <person name="Salzberg S.L."/>
            <person name="Fraser-Liggett C.M."/>
            <person name="Rasko D.A."/>
        </authorList>
    </citation>
    <scope>NUCLEOTIDE SEQUENCE [LARGE SCALE GENOMIC DNA]</scope>
    <source>
        <strain>Ames ancestor</strain>
    </source>
</reference>
<reference key="3">
    <citation type="submission" date="2004-01" db="EMBL/GenBank/DDBJ databases">
        <title>Complete genome sequence of Bacillus anthracis Sterne.</title>
        <authorList>
            <person name="Brettin T.S."/>
            <person name="Bruce D."/>
            <person name="Challacombe J.F."/>
            <person name="Gilna P."/>
            <person name="Han C."/>
            <person name="Hill K."/>
            <person name="Hitchcock P."/>
            <person name="Jackson P."/>
            <person name="Keim P."/>
            <person name="Longmire J."/>
            <person name="Lucas S."/>
            <person name="Okinaka R."/>
            <person name="Richardson P."/>
            <person name="Rubin E."/>
            <person name="Tice H."/>
        </authorList>
    </citation>
    <scope>NUCLEOTIDE SEQUENCE [LARGE SCALE GENOMIC DNA]</scope>
    <source>
        <strain>Sterne</strain>
    </source>
</reference>
<sequence>MNAEIIAVGTELLLGQIANTNAQFLSEKLASIGINVYYHTVVGDNNKRLQQAIEVAEERADMLIFTGGLGPTKDDLTKETIASSLAEELVYDEKALASISDYFKRTGREFTENNKKQALVLDGATVFANDHGMAPGMGLNKNGKVYILLPGPPKEMKPMYVSYVEPFLRNFTTGENIYSRVLRFFGIGESQLEVKVQDLIDGQTNPTIAPLANDGEVTLRLTAKHQNVDEAEKLIQHVEDLILERVGGFFYGYDQEFLHDKAIVLLKKKGLTLACAESLTGGLFGNQVTESAGVSSVFKGGVICYHNDVKQHVLHVPEEVLFTDGAVSKECARYLAENVKELLEADIGISFTGVAGPDASEHKEPGTVFVGLAIKDEPTVVFPLNLSGSRQQIRERSAKYGFYHLYKKLEEI</sequence>
<comment type="similarity">
    <text evidence="1">Belongs to the CinA family.</text>
</comment>
<accession>Q81WQ3</accession>
<accession>Q6HUV6</accession>
<accession>Q6KP33</accession>
<organism>
    <name type="scientific">Bacillus anthracis</name>
    <dbReference type="NCBI Taxonomy" id="1392"/>
    <lineage>
        <taxon>Bacteria</taxon>
        <taxon>Bacillati</taxon>
        <taxon>Bacillota</taxon>
        <taxon>Bacilli</taxon>
        <taxon>Bacillales</taxon>
        <taxon>Bacillaceae</taxon>
        <taxon>Bacillus</taxon>
        <taxon>Bacillus cereus group</taxon>
    </lineage>
</organism>
<dbReference type="EMBL" id="AE016879">
    <property type="protein sequence ID" value="AAP27649.1"/>
    <property type="molecule type" value="Genomic_DNA"/>
</dbReference>
<dbReference type="EMBL" id="AE017334">
    <property type="protein sequence ID" value="AAT33032.1"/>
    <property type="molecule type" value="Genomic_DNA"/>
</dbReference>
<dbReference type="EMBL" id="AE017225">
    <property type="protein sequence ID" value="AAT55933.1"/>
    <property type="molecule type" value="Genomic_DNA"/>
</dbReference>
<dbReference type="RefSeq" id="NP_846163.1">
    <property type="nucleotide sequence ID" value="NC_003997.3"/>
</dbReference>
<dbReference type="RefSeq" id="WP_000990715.1">
    <property type="nucleotide sequence ID" value="NZ_WXXJ01000027.1"/>
</dbReference>
<dbReference type="RefSeq" id="YP_029882.1">
    <property type="nucleotide sequence ID" value="NC_005945.1"/>
</dbReference>
<dbReference type="SMR" id="Q81WQ3"/>
<dbReference type="STRING" id="261594.GBAA_3916"/>
<dbReference type="DNASU" id="1087939"/>
<dbReference type="GeneID" id="45023610"/>
<dbReference type="KEGG" id="ban:BA_3916"/>
<dbReference type="KEGG" id="bar:GBAA_3916"/>
<dbReference type="KEGG" id="bat:BAS3630"/>
<dbReference type="PATRIC" id="fig|198094.11.peg.3887"/>
<dbReference type="eggNOG" id="COG1058">
    <property type="taxonomic scope" value="Bacteria"/>
</dbReference>
<dbReference type="eggNOG" id="COG1546">
    <property type="taxonomic scope" value="Bacteria"/>
</dbReference>
<dbReference type="HOGENOM" id="CLU_030805_9_3_9"/>
<dbReference type="OMA" id="TAPGMIW"/>
<dbReference type="OrthoDB" id="9801454at2"/>
<dbReference type="Proteomes" id="UP000000427">
    <property type="component" value="Chromosome"/>
</dbReference>
<dbReference type="Proteomes" id="UP000000594">
    <property type="component" value="Chromosome"/>
</dbReference>
<dbReference type="CDD" id="cd00885">
    <property type="entry name" value="cinA"/>
    <property type="match status" value="1"/>
</dbReference>
<dbReference type="Gene3D" id="3.30.70.2860">
    <property type="match status" value="1"/>
</dbReference>
<dbReference type="Gene3D" id="3.90.950.20">
    <property type="entry name" value="CinA-like"/>
    <property type="match status" value="1"/>
</dbReference>
<dbReference type="Gene3D" id="3.40.980.10">
    <property type="entry name" value="MoaB/Mog-like domain"/>
    <property type="match status" value="1"/>
</dbReference>
<dbReference type="HAMAP" id="MF_00226_B">
    <property type="entry name" value="CinA_B"/>
    <property type="match status" value="1"/>
</dbReference>
<dbReference type="InterPro" id="IPR050101">
    <property type="entry name" value="CinA"/>
</dbReference>
<dbReference type="InterPro" id="IPR036653">
    <property type="entry name" value="CinA-like_C"/>
</dbReference>
<dbReference type="InterPro" id="IPR008136">
    <property type="entry name" value="CinA_C"/>
</dbReference>
<dbReference type="InterPro" id="IPR041424">
    <property type="entry name" value="CinA_KH"/>
</dbReference>
<dbReference type="InterPro" id="IPR008135">
    <property type="entry name" value="Competence-induced_CinA"/>
</dbReference>
<dbReference type="InterPro" id="IPR036425">
    <property type="entry name" value="MoaB/Mog-like_dom_sf"/>
</dbReference>
<dbReference type="InterPro" id="IPR001453">
    <property type="entry name" value="MoaB/Mog_dom"/>
</dbReference>
<dbReference type="NCBIfam" id="TIGR00200">
    <property type="entry name" value="cinA_nterm"/>
    <property type="match status" value="1"/>
</dbReference>
<dbReference type="NCBIfam" id="TIGR00177">
    <property type="entry name" value="molyb_syn"/>
    <property type="match status" value="1"/>
</dbReference>
<dbReference type="NCBIfam" id="TIGR00199">
    <property type="entry name" value="PncC_domain"/>
    <property type="match status" value="1"/>
</dbReference>
<dbReference type="NCBIfam" id="NF001813">
    <property type="entry name" value="PRK00549.1"/>
    <property type="match status" value="1"/>
</dbReference>
<dbReference type="PANTHER" id="PTHR13939">
    <property type="entry name" value="NICOTINAMIDE-NUCLEOTIDE AMIDOHYDROLASE PNCC"/>
    <property type="match status" value="1"/>
</dbReference>
<dbReference type="PANTHER" id="PTHR13939:SF0">
    <property type="entry name" value="NMN AMIDOHYDROLASE-LIKE PROTEIN YFAY"/>
    <property type="match status" value="1"/>
</dbReference>
<dbReference type="Pfam" id="PF02464">
    <property type="entry name" value="CinA"/>
    <property type="match status" value="1"/>
</dbReference>
<dbReference type="Pfam" id="PF18146">
    <property type="entry name" value="CinA_KH"/>
    <property type="match status" value="1"/>
</dbReference>
<dbReference type="Pfam" id="PF00994">
    <property type="entry name" value="MoCF_biosynth"/>
    <property type="match status" value="1"/>
</dbReference>
<dbReference type="PIRSF" id="PIRSF006728">
    <property type="entry name" value="CinA"/>
    <property type="match status" value="1"/>
</dbReference>
<dbReference type="SMART" id="SM00852">
    <property type="entry name" value="MoCF_biosynth"/>
    <property type="match status" value="1"/>
</dbReference>
<dbReference type="SUPFAM" id="SSF142433">
    <property type="entry name" value="CinA-like"/>
    <property type="match status" value="1"/>
</dbReference>
<dbReference type="SUPFAM" id="SSF53218">
    <property type="entry name" value="Molybdenum cofactor biosynthesis proteins"/>
    <property type="match status" value="1"/>
</dbReference>
<feature type="chain" id="PRO_0000156746" description="Putative competence-damage inducible protein">
    <location>
        <begin position="1"/>
        <end position="412"/>
    </location>
</feature>
<gene>
    <name evidence="1" type="primary">cinA</name>
    <name type="ordered locus">BA_3916</name>
    <name type="ordered locus">GBAA_3916</name>
    <name type="ordered locus">BAS3630</name>
</gene>
<name>CINA_BACAN</name>